<sequence>MQARDPHVNVIFVGLMGAGKTTVGRAVARRLDRPFFDSDHEIEARTGARIPVIFELEGEAGFRDREAQMIAELTQRENIVLATGGGAILRPENRKLLHERGLVVYLRANPHDLWLRTRKDKNRPLLQTDDPKAKLEALYEARDPLYRECAHFVIETGRPSVNGLVNMVLMQLEMAGIVAKPLQA</sequence>
<reference key="1">
    <citation type="journal article" date="2004" name="Proc. Natl. Acad. Sci. U.S.A.">
        <title>Genomic plasticity of the causative agent of melioidosis, Burkholderia pseudomallei.</title>
        <authorList>
            <person name="Holden M.T.G."/>
            <person name="Titball R.W."/>
            <person name="Peacock S.J."/>
            <person name="Cerdeno-Tarraga A.-M."/>
            <person name="Atkins T."/>
            <person name="Crossman L.C."/>
            <person name="Pitt T."/>
            <person name="Churcher C."/>
            <person name="Mungall K.L."/>
            <person name="Bentley S.D."/>
            <person name="Sebaihia M."/>
            <person name="Thomson N.R."/>
            <person name="Bason N."/>
            <person name="Beacham I.R."/>
            <person name="Brooks K."/>
            <person name="Brown K.A."/>
            <person name="Brown N.F."/>
            <person name="Challis G.L."/>
            <person name="Cherevach I."/>
            <person name="Chillingworth T."/>
            <person name="Cronin A."/>
            <person name="Crossett B."/>
            <person name="Davis P."/>
            <person name="DeShazer D."/>
            <person name="Feltwell T."/>
            <person name="Fraser A."/>
            <person name="Hance Z."/>
            <person name="Hauser H."/>
            <person name="Holroyd S."/>
            <person name="Jagels K."/>
            <person name="Keith K.E."/>
            <person name="Maddison M."/>
            <person name="Moule S."/>
            <person name="Price C."/>
            <person name="Quail M.A."/>
            <person name="Rabbinowitsch E."/>
            <person name="Rutherford K."/>
            <person name="Sanders M."/>
            <person name="Simmonds M."/>
            <person name="Songsivilai S."/>
            <person name="Stevens K."/>
            <person name="Tumapa S."/>
            <person name="Vesaratchavest M."/>
            <person name="Whitehead S."/>
            <person name="Yeats C."/>
            <person name="Barrell B.G."/>
            <person name="Oyston P.C.F."/>
            <person name="Parkhill J."/>
        </authorList>
    </citation>
    <scope>NUCLEOTIDE SEQUENCE [LARGE SCALE GENOMIC DNA]</scope>
    <source>
        <strain>K96243</strain>
    </source>
</reference>
<keyword id="KW-0028">Amino-acid biosynthesis</keyword>
<keyword id="KW-0057">Aromatic amino acid biosynthesis</keyword>
<keyword id="KW-0067">ATP-binding</keyword>
<keyword id="KW-0963">Cytoplasm</keyword>
<keyword id="KW-0418">Kinase</keyword>
<keyword id="KW-0460">Magnesium</keyword>
<keyword id="KW-0479">Metal-binding</keyword>
<keyword id="KW-0547">Nucleotide-binding</keyword>
<keyword id="KW-1185">Reference proteome</keyword>
<keyword id="KW-0808">Transferase</keyword>
<organism>
    <name type="scientific">Burkholderia pseudomallei (strain K96243)</name>
    <dbReference type="NCBI Taxonomy" id="272560"/>
    <lineage>
        <taxon>Bacteria</taxon>
        <taxon>Pseudomonadati</taxon>
        <taxon>Pseudomonadota</taxon>
        <taxon>Betaproteobacteria</taxon>
        <taxon>Burkholderiales</taxon>
        <taxon>Burkholderiaceae</taxon>
        <taxon>Burkholderia</taxon>
        <taxon>pseudomallei group</taxon>
    </lineage>
</organism>
<gene>
    <name evidence="1" type="primary">aroK</name>
    <name type="ordered locus">BPSL3169</name>
</gene>
<protein>
    <recommendedName>
        <fullName evidence="1">Shikimate kinase</fullName>
        <shortName evidence="1">SK</shortName>
        <ecNumber evidence="1">2.7.1.71</ecNumber>
    </recommendedName>
</protein>
<feature type="chain" id="PRO_0000237858" description="Shikimate kinase">
    <location>
        <begin position="1"/>
        <end position="184"/>
    </location>
</feature>
<feature type="binding site" evidence="1">
    <location>
        <begin position="17"/>
        <end position="22"/>
    </location>
    <ligand>
        <name>ATP</name>
        <dbReference type="ChEBI" id="CHEBI:30616"/>
    </ligand>
</feature>
<feature type="binding site" evidence="1">
    <location>
        <position position="21"/>
    </location>
    <ligand>
        <name>Mg(2+)</name>
        <dbReference type="ChEBI" id="CHEBI:18420"/>
    </ligand>
</feature>
<feature type="binding site" evidence="1">
    <location>
        <position position="39"/>
    </location>
    <ligand>
        <name>substrate</name>
    </ligand>
</feature>
<feature type="binding site" evidence="1">
    <location>
        <position position="63"/>
    </location>
    <ligand>
        <name>substrate</name>
    </ligand>
</feature>
<feature type="binding site" evidence="1">
    <location>
        <position position="85"/>
    </location>
    <ligand>
        <name>substrate</name>
    </ligand>
</feature>
<feature type="binding site" evidence="1">
    <location>
        <position position="123"/>
    </location>
    <ligand>
        <name>ATP</name>
        <dbReference type="ChEBI" id="CHEBI:30616"/>
    </ligand>
</feature>
<feature type="binding site" evidence="1">
    <location>
        <position position="142"/>
    </location>
    <ligand>
        <name>substrate</name>
    </ligand>
</feature>
<comment type="function">
    <text evidence="1">Catalyzes the specific phosphorylation of the 3-hydroxyl group of shikimic acid using ATP as a cosubstrate.</text>
</comment>
<comment type="catalytic activity">
    <reaction evidence="1">
        <text>shikimate + ATP = 3-phosphoshikimate + ADP + H(+)</text>
        <dbReference type="Rhea" id="RHEA:13121"/>
        <dbReference type="ChEBI" id="CHEBI:15378"/>
        <dbReference type="ChEBI" id="CHEBI:30616"/>
        <dbReference type="ChEBI" id="CHEBI:36208"/>
        <dbReference type="ChEBI" id="CHEBI:145989"/>
        <dbReference type="ChEBI" id="CHEBI:456216"/>
        <dbReference type="EC" id="2.7.1.71"/>
    </reaction>
</comment>
<comment type="cofactor">
    <cofactor evidence="1">
        <name>Mg(2+)</name>
        <dbReference type="ChEBI" id="CHEBI:18420"/>
    </cofactor>
    <text evidence="1">Binds 1 Mg(2+) ion per subunit.</text>
</comment>
<comment type="pathway">
    <text evidence="1">Metabolic intermediate biosynthesis; chorismate biosynthesis; chorismate from D-erythrose 4-phosphate and phosphoenolpyruvate: step 5/7.</text>
</comment>
<comment type="subunit">
    <text evidence="1">Monomer.</text>
</comment>
<comment type="subcellular location">
    <subcellularLocation>
        <location evidence="1">Cytoplasm</location>
    </subcellularLocation>
</comment>
<comment type="similarity">
    <text evidence="1">Belongs to the shikimate kinase family.</text>
</comment>
<dbReference type="EC" id="2.7.1.71" evidence="1"/>
<dbReference type="EMBL" id="BX571965">
    <property type="protein sequence ID" value="CAH37179.1"/>
    <property type="molecule type" value="Genomic_DNA"/>
</dbReference>
<dbReference type="RefSeq" id="WP_004535019.1">
    <property type="nucleotide sequence ID" value="NZ_CP009538.1"/>
</dbReference>
<dbReference type="RefSeq" id="YP_109762.1">
    <property type="nucleotide sequence ID" value="NC_006350.1"/>
</dbReference>
<dbReference type="SMR" id="Q63Q56"/>
<dbReference type="STRING" id="272560.BPSL3169"/>
<dbReference type="KEGG" id="bps:BPSL3169"/>
<dbReference type="PATRIC" id="fig|272560.51.peg.2070"/>
<dbReference type="eggNOG" id="COG0703">
    <property type="taxonomic scope" value="Bacteria"/>
</dbReference>
<dbReference type="UniPathway" id="UPA00053">
    <property type="reaction ID" value="UER00088"/>
</dbReference>
<dbReference type="Proteomes" id="UP000000605">
    <property type="component" value="Chromosome 1"/>
</dbReference>
<dbReference type="GO" id="GO:0005829">
    <property type="term" value="C:cytosol"/>
    <property type="evidence" value="ECO:0007669"/>
    <property type="project" value="TreeGrafter"/>
</dbReference>
<dbReference type="GO" id="GO:0005524">
    <property type="term" value="F:ATP binding"/>
    <property type="evidence" value="ECO:0007669"/>
    <property type="project" value="UniProtKB-UniRule"/>
</dbReference>
<dbReference type="GO" id="GO:0000287">
    <property type="term" value="F:magnesium ion binding"/>
    <property type="evidence" value="ECO:0007669"/>
    <property type="project" value="UniProtKB-UniRule"/>
</dbReference>
<dbReference type="GO" id="GO:0004765">
    <property type="term" value="F:shikimate kinase activity"/>
    <property type="evidence" value="ECO:0007669"/>
    <property type="project" value="UniProtKB-UniRule"/>
</dbReference>
<dbReference type="GO" id="GO:0008652">
    <property type="term" value="P:amino acid biosynthetic process"/>
    <property type="evidence" value="ECO:0007669"/>
    <property type="project" value="UniProtKB-KW"/>
</dbReference>
<dbReference type="GO" id="GO:0009073">
    <property type="term" value="P:aromatic amino acid family biosynthetic process"/>
    <property type="evidence" value="ECO:0007669"/>
    <property type="project" value="UniProtKB-KW"/>
</dbReference>
<dbReference type="GO" id="GO:0009423">
    <property type="term" value="P:chorismate biosynthetic process"/>
    <property type="evidence" value="ECO:0007669"/>
    <property type="project" value="UniProtKB-UniRule"/>
</dbReference>
<dbReference type="CDD" id="cd00464">
    <property type="entry name" value="SK"/>
    <property type="match status" value="1"/>
</dbReference>
<dbReference type="Gene3D" id="3.40.50.300">
    <property type="entry name" value="P-loop containing nucleotide triphosphate hydrolases"/>
    <property type="match status" value="1"/>
</dbReference>
<dbReference type="HAMAP" id="MF_00109">
    <property type="entry name" value="Shikimate_kinase"/>
    <property type="match status" value="1"/>
</dbReference>
<dbReference type="InterPro" id="IPR027417">
    <property type="entry name" value="P-loop_NTPase"/>
</dbReference>
<dbReference type="InterPro" id="IPR031322">
    <property type="entry name" value="Shikimate/glucono_kinase"/>
</dbReference>
<dbReference type="InterPro" id="IPR000623">
    <property type="entry name" value="Shikimate_kinase/TSH1"/>
</dbReference>
<dbReference type="InterPro" id="IPR023000">
    <property type="entry name" value="Shikimate_kinase_CS"/>
</dbReference>
<dbReference type="PANTHER" id="PTHR21087">
    <property type="entry name" value="SHIKIMATE KINASE"/>
    <property type="match status" value="1"/>
</dbReference>
<dbReference type="PANTHER" id="PTHR21087:SF16">
    <property type="entry name" value="SHIKIMATE KINASE 1, CHLOROPLASTIC"/>
    <property type="match status" value="1"/>
</dbReference>
<dbReference type="Pfam" id="PF01202">
    <property type="entry name" value="SKI"/>
    <property type="match status" value="1"/>
</dbReference>
<dbReference type="PRINTS" id="PR01100">
    <property type="entry name" value="SHIKIMTKNASE"/>
</dbReference>
<dbReference type="SUPFAM" id="SSF52540">
    <property type="entry name" value="P-loop containing nucleoside triphosphate hydrolases"/>
    <property type="match status" value="1"/>
</dbReference>
<dbReference type="PROSITE" id="PS01128">
    <property type="entry name" value="SHIKIMATE_KINASE"/>
    <property type="match status" value="1"/>
</dbReference>
<accession>Q63Q56</accession>
<proteinExistence type="inferred from homology"/>
<name>AROK_BURPS</name>
<evidence type="ECO:0000255" key="1">
    <source>
        <dbReference type="HAMAP-Rule" id="MF_00109"/>
    </source>
</evidence>